<reference key="1">
    <citation type="journal article" date="2007" name="PLoS ONE">
        <title>Molecular correlates of host specialization in Staphylococcus aureus.</title>
        <authorList>
            <person name="Herron-Olson L."/>
            <person name="Fitzgerald J.R."/>
            <person name="Musser J.M."/>
            <person name="Kapur V."/>
        </authorList>
    </citation>
    <scope>NUCLEOTIDE SEQUENCE [LARGE SCALE GENOMIC DNA]</scope>
    <source>
        <strain>bovine RF122 / ET3-1</strain>
    </source>
</reference>
<proteinExistence type="inferred from homology"/>
<name>RL27_STAAB</name>
<keyword id="KW-0687">Ribonucleoprotein</keyword>
<keyword id="KW-0689">Ribosomal protein</keyword>
<organism>
    <name type="scientific">Staphylococcus aureus (strain bovine RF122 / ET3-1)</name>
    <dbReference type="NCBI Taxonomy" id="273036"/>
    <lineage>
        <taxon>Bacteria</taxon>
        <taxon>Bacillati</taxon>
        <taxon>Bacillota</taxon>
        <taxon>Bacilli</taxon>
        <taxon>Bacillales</taxon>
        <taxon>Staphylococcaceae</taxon>
        <taxon>Staphylococcus</taxon>
    </lineage>
</organism>
<gene>
    <name evidence="2" type="primary">rpmA</name>
    <name type="ordered locus">SAB1514c</name>
</gene>
<dbReference type="EMBL" id="AJ938182">
    <property type="protein sequence ID" value="CAI81203.1"/>
    <property type="molecule type" value="Genomic_DNA"/>
</dbReference>
<dbReference type="RefSeq" id="WP_000916187.1">
    <property type="nucleotide sequence ID" value="NC_007622.1"/>
</dbReference>
<dbReference type="EMDB" id="EMD-0243"/>
<dbReference type="SMR" id="Q2YT85"/>
<dbReference type="GeneID" id="98346013"/>
<dbReference type="KEGG" id="sab:SAB1514c"/>
<dbReference type="HOGENOM" id="CLU_095424_4_0_9"/>
<dbReference type="GO" id="GO:0022625">
    <property type="term" value="C:cytosolic large ribosomal subunit"/>
    <property type="evidence" value="ECO:0007669"/>
    <property type="project" value="TreeGrafter"/>
</dbReference>
<dbReference type="GO" id="GO:0003735">
    <property type="term" value="F:structural constituent of ribosome"/>
    <property type="evidence" value="ECO:0007669"/>
    <property type="project" value="InterPro"/>
</dbReference>
<dbReference type="GO" id="GO:0006412">
    <property type="term" value="P:translation"/>
    <property type="evidence" value="ECO:0007669"/>
    <property type="project" value="UniProtKB-UniRule"/>
</dbReference>
<dbReference type="FunFam" id="2.40.50.100:FF:000004">
    <property type="entry name" value="50S ribosomal protein L27"/>
    <property type="match status" value="1"/>
</dbReference>
<dbReference type="Gene3D" id="2.40.50.100">
    <property type="match status" value="1"/>
</dbReference>
<dbReference type="HAMAP" id="MF_00539">
    <property type="entry name" value="Ribosomal_bL27"/>
    <property type="match status" value="1"/>
</dbReference>
<dbReference type="InterPro" id="IPR001684">
    <property type="entry name" value="Ribosomal_bL27"/>
</dbReference>
<dbReference type="InterPro" id="IPR018261">
    <property type="entry name" value="Ribosomal_bL27_CS"/>
</dbReference>
<dbReference type="NCBIfam" id="TIGR00062">
    <property type="entry name" value="L27"/>
    <property type="match status" value="1"/>
</dbReference>
<dbReference type="PANTHER" id="PTHR15893:SF0">
    <property type="entry name" value="LARGE RIBOSOMAL SUBUNIT PROTEIN BL27M"/>
    <property type="match status" value="1"/>
</dbReference>
<dbReference type="PANTHER" id="PTHR15893">
    <property type="entry name" value="RIBOSOMAL PROTEIN L27"/>
    <property type="match status" value="1"/>
</dbReference>
<dbReference type="Pfam" id="PF01016">
    <property type="entry name" value="Ribosomal_L27"/>
    <property type="match status" value="1"/>
</dbReference>
<dbReference type="PRINTS" id="PR00063">
    <property type="entry name" value="RIBOSOMALL27"/>
</dbReference>
<dbReference type="SUPFAM" id="SSF110324">
    <property type="entry name" value="Ribosomal L27 protein-like"/>
    <property type="match status" value="1"/>
</dbReference>
<dbReference type="PROSITE" id="PS00831">
    <property type="entry name" value="RIBOSOMAL_L27"/>
    <property type="match status" value="1"/>
</dbReference>
<protein>
    <recommendedName>
        <fullName evidence="2">Large ribosomal subunit protein bL27</fullName>
    </recommendedName>
    <alternativeName>
        <fullName evidence="3">50S ribosomal protein L27</fullName>
    </alternativeName>
</protein>
<evidence type="ECO:0000250" key="1">
    <source>
        <dbReference type="UniProtKB" id="Q2FXT0"/>
    </source>
</evidence>
<evidence type="ECO:0000255" key="2">
    <source>
        <dbReference type="HAMAP-Rule" id="MF_00539"/>
    </source>
</evidence>
<evidence type="ECO:0000305" key="3"/>
<sequence length="94" mass="10315">MLKLNLQFFASKKGVSSTKNGRDSESKRLGAKRADGQFVTGGSILYRQRGTKIYPGENVGRGGDDTLFAKIDGVVKFERKGRDKKQVSVYAVAE</sequence>
<feature type="propeptide" id="PRO_0000459927" evidence="1">
    <location>
        <begin position="1"/>
        <end position="9"/>
    </location>
</feature>
<feature type="chain" id="PRO_1000017620" description="Large ribosomal subunit protein bL27">
    <location>
        <begin position="10"/>
        <end position="94"/>
    </location>
</feature>
<accession>Q2YT85</accession>
<comment type="PTM">
    <text evidence="1">The N-terminus is cleaved by ribosomal processing cysteine protease Prp.</text>
</comment>
<comment type="similarity">
    <text evidence="2">Belongs to the bacterial ribosomal protein bL27 family.</text>
</comment>